<name>FES_ECOL6</name>
<proteinExistence type="evidence at protein level"/>
<feature type="chain" id="PRO_0000452105" description="Iron(III) enterobactin esterase">
    <location>
        <begin position="1"/>
        <end position="400"/>
    </location>
</feature>
<sequence length="400" mass="45641">MTALKVGSESWWQSKHGPEWQRLNDEMFEVTFWWRDPQGSEEYSTIKRVWVYITGVTDHHQNSQPRSMQRIAGTDVWQWTTQLNANWRGSYCFIPTERDDIFSAPSPDRLELREGWRKLLPQAIADPLNPQSWKGGRGHAVSALEMPQAPLQPGWDCPQAPETPAKEIIWKSERLKNSRRVWIFTTGDATAEERPLAVLLDGEFWAQSMPVWPALTSLTHRRQLPPAVYVLIDAIDTTHRAHELPCNADFWLAVQQELLPQVKAIAPFSDRADRTVVAGQSFGGLSALYAGLHWPERFGCVLSQSGSYWWPHRGGHQEGMLLEQLNTGEVSAEGLRIVLEAGVREPMIMQANQALYAQLHPLKESIFWRQVDGGHDALCWRGGLMQGLIDLWQPLFHDRS</sequence>
<keyword id="KW-0963">Cytoplasm</keyword>
<keyword id="KW-0378">Hydrolase</keyword>
<keyword id="KW-1185">Reference proteome</keyword>
<organism>
    <name type="scientific">Escherichia coli O6:H1 (strain CFT073 / ATCC 700928 / UPEC)</name>
    <dbReference type="NCBI Taxonomy" id="199310"/>
    <lineage>
        <taxon>Bacteria</taxon>
        <taxon>Pseudomonadati</taxon>
        <taxon>Pseudomonadota</taxon>
        <taxon>Gammaproteobacteria</taxon>
        <taxon>Enterobacterales</taxon>
        <taxon>Enterobacteriaceae</taxon>
        <taxon>Escherichia</taxon>
    </lineage>
</organism>
<accession>A0A0H2V760</accession>
<protein>
    <recommendedName>
        <fullName evidence="4">Iron(III) enterobactin esterase</fullName>
        <ecNumber evidence="2">3.1.1.108</ecNumber>
    </recommendedName>
    <alternativeName>
        <fullName evidence="3">Fe-Ent esterase</fullName>
    </alternativeName>
</protein>
<evidence type="ECO:0000250" key="1">
    <source>
        <dbReference type="UniProtKB" id="P13039"/>
    </source>
</evidence>
<evidence type="ECO:0000269" key="2">
    <source>
    </source>
</evidence>
<evidence type="ECO:0000303" key="3">
    <source>
    </source>
</evidence>
<evidence type="ECO:0000305" key="4"/>
<evidence type="ECO:0000312" key="5">
    <source>
        <dbReference type="EMBL" id="AAN79146.1"/>
    </source>
</evidence>
<gene>
    <name evidence="3" type="primary">fes</name>
    <name evidence="5" type="ordered locus">c0671</name>
</gene>
<dbReference type="EC" id="3.1.1.108" evidence="2"/>
<dbReference type="EMBL" id="AE014075">
    <property type="protein sequence ID" value="AAN79146.1"/>
    <property type="molecule type" value="Genomic_DNA"/>
</dbReference>
<dbReference type="RefSeq" id="WP_000125846.1">
    <property type="nucleotide sequence ID" value="NZ_CP051263.1"/>
</dbReference>
<dbReference type="SMR" id="A0A0H2V760"/>
<dbReference type="STRING" id="199310.c0671"/>
<dbReference type="ESTHER" id="ecoli-fes">
    <property type="family name" value="A85-IroE-IroD-Fes-Yiel"/>
</dbReference>
<dbReference type="KEGG" id="ecc:c0671"/>
<dbReference type="eggNOG" id="COG2382">
    <property type="taxonomic scope" value="Bacteria"/>
</dbReference>
<dbReference type="HOGENOM" id="CLU_024314_3_0_6"/>
<dbReference type="Proteomes" id="UP000001410">
    <property type="component" value="Chromosome"/>
</dbReference>
<dbReference type="GO" id="GO:0005737">
    <property type="term" value="C:cytoplasm"/>
    <property type="evidence" value="ECO:0007669"/>
    <property type="project" value="UniProtKB-SubCell"/>
</dbReference>
<dbReference type="GO" id="GO:0008849">
    <property type="term" value="F:enterochelin esterase activity"/>
    <property type="evidence" value="ECO:0007669"/>
    <property type="project" value="InterPro"/>
</dbReference>
<dbReference type="GO" id="GO:0005506">
    <property type="term" value="F:iron ion binding"/>
    <property type="evidence" value="ECO:0007669"/>
    <property type="project" value="InterPro"/>
</dbReference>
<dbReference type="GO" id="GO:0006826">
    <property type="term" value="P:iron ion transport"/>
    <property type="evidence" value="ECO:0007669"/>
    <property type="project" value="InterPro"/>
</dbReference>
<dbReference type="FunFam" id="2.60.40.10:FF:001518">
    <property type="entry name" value="Enterochelin esterase"/>
    <property type="match status" value="1"/>
</dbReference>
<dbReference type="FunFam" id="3.40.50.1820:FF:000162">
    <property type="entry name" value="Enterochelin esterase"/>
    <property type="match status" value="1"/>
</dbReference>
<dbReference type="Gene3D" id="3.40.50.1820">
    <property type="entry name" value="alpha/beta hydrolase"/>
    <property type="match status" value="1"/>
</dbReference>
<dbReference type="Gene3D" id="2.60.40.10">
    <property type="entry name" value="Immunoglobulins"/>
    <property type="match status" value="1"/>
</dbReference>
<dbReference type="InterPro" id="IPR029058">
    <property type="entry name" value="AB_hydrolase_fold"/>
</dbReference>
<dbReference type="InterPro" id="IPR021764">
    <property type="entry name" value="Enterochelin_esterase_N"/>
</dbReference>
<dbReference type="InterPro" id="IPR000801">
    <property type="entry name" value="Esterase-like"/>
</dbReference>
<dbReference type="InterPro" id="IPR013783">
    <property type="entry name" value="Ig-like_fold"/>
</dbReference>
<dbReference type="InterPro" id="IPR014756">
    <property type="entry name" value="Ig_E-set"/>
</dbReference>
<dbReference type="InterPro" id="IPR050583">
    <property type="entry name" value="Mycobacterial_A85_antigen"/>
</dbReference>
<dbReference type="NCBIfam" id="NF007758">
    <property type="entry name" value="PRK10439.1"/>
    <property type="match status" value="1"/>
</dbReference>
<dbReference type="PANTHER" id="PTHR48098">
    <property type="entry name" value="ENTEROCHELIN ESTERASE-RELATED"/>
    <property type="match status" value="1"/>
</dbReference>
<dbReference type="PANTHER" id="PTHR48098:SF3">
    <property type="entry name" value="IRON(III) ENTEROBACTIN ESTERASE"/>
    <property type="match status" value="1"/>
</dbReference>
<dbReference type="Pfam" id="PF11806">
    <property type="entry name" value="Enterochelin_N"/>
    <property type="match status" value="1"/>
</dbReference>
<dbReference type="Pfam" id="PF00756">
    <property type="entry name" value="Esterase"/>
    <property type="match status" value="1"/>
</dbReference>
<dbReference type="SUPFAM" id="SSF53474">
    <property type="entry name" value="alpha/beta-Hydrolases"/>
    <property type="match status" value="1"/>
</dbReference>
<dbReference type="SUPFAM" id="SSF81296">
    <property type="entry name" value="E set domains"/>
    <property type="match status" value="1"/>
</dbReference>
<reference key="1">
    <citation type="journal article" date="2002" name="Proc. Natl. Acad. Sci. U.S.A.">
        <title>Extensive mosaic structure revealed by the complete genome sequence of uropathogenic Escherichia coli.</title>
        <authorList>
            <person name="Welch R.A."/>
            <person name="Burland V."/>
            <person name="Plunkett G. III"/>
            <person name="Redford P."/>
            <person name="Roesch P."/>
            <person name="Rasko D."/>
            <person name="Buckles E.L."/>
            <person name="Liou S.-R."/>
            <person name="Boutin A."/>
            <person name="Hackett J."/>
            <person name="Stroud D."/>
            <person name="Mayhew G.F."/>
            <person name="Rose D.J."/>
            <person name="Zhou S."/>
            <person name="Schwartz D.C."/>
            <person name="Perna N.T."/>
            <person name="Mobley H.L.T."/>
            <person name="Donnenberg M.S."/>
            <person name="Blattner F.R."/>
        </authorList>
    </citation>
    <scope>NUCLEOTIDE SEQUENCE [LARGE SCALE GENOMIC DNA]</scope>
    <source>
        <strain>CFT073 / ATCC 700928 / UPEC</strain>
    </source>
</reference>
<reference key="2">
    <citation type="journal article" date="2005" name="J. Am. Chem. Soc.">
        <title>In vitro characterization of salmochelin and enterobactin trilactone hydrolases IroD, IroE, and Fes.</title>
        <authorList>
            <person name="Lin H."/>
            <person name="Fischbach M.A."/>
            <person name="Liu D.R."/>
            <person name="Walsh C.T."/>
        </authorList>
    </citation>
    <scope>FUNCTION</scope>
    <scope>CATALYTIC ACTIVITY</scope>
    <scope>BIOPHYSICOCHEMICAL PROPERTIES</scope>
    <source>
        <strain>CFT073 / ATCC 700928 / UPEC</strain>
    </source>
</reference>
<comment type="function">
    <text evidence="2">Catalyzes the hydrolysis of ferric enterobactin (Fe-Ent). Is responsible for the release of iron from ferric enterobactin. Also catalyzes the hydrolysis of iron-free enterobactin (Ent). Hydrolyzes ferric monoglucosyl-C-Ent (Fe-MGE) poorly and does not hydrolyze ferric diglucosyl-C-Ent (Fe-DGE) or ferric triglucosyl-C-Ent (Fe-TGE) at all. Also hydrolyzes apo MGE, but catalyzes the hydrolysis of apo DGE very poorly, and does not process apo TGE at all. The catalytic efficiency for processing Fe-Ent is much higher than that for apo Ent, suggesting that Fe-Ent is the physiological substrate.</text>
</comment>
<comment type="catalytic activity">
    <reaction evidence="2">
        <text>Fe(III)-enterobactin + 3 H2O + H(+) = Fe(III)-[N-(2,3-dihydroxybenzoyl)-L-serine] + 2 N-(2,3-dihydroxybenzoyl)-L-serine</text>
        <dbReference type="Rhea" id="RHEA:30111"/>
        <dbReference type="ChEBI" id="CHEBI:15377"/>
        <dbReference type="ChEBI" id="CHEBI:15378"/>
        <dbReference type="ChEBI" id="CHEBI:28199"/>
        <dbReference type="ChEBI" id="CHEBI:58154"/>
        <dbReference type="ChEBI" id="CHEBI:143010"/>
        <dbReference type="EC" id="3.1.1.108"/>
    </reaction>
    <physiologicalReaction direction="left-to-right" evidence="2">
        <dbReference type="Rhea" id="RHEA:30112"/>
    </physiologicalReaction>
</comment>
<comment type="catalytic activity">
    <reaction evidence="1">
        <text>Fe(III)-enterobactin + H2O = Fe(III)-[N-(2,3-dihydroxybenzoyl)-L-serine]3 + H(+)</text>
        <dbReference type="Rhea" id="RHEA:59256"/>
        <dbReference type="ChEBI" id="CHEBI:15377"/>
        <dbReference type="ChEBI" id="CHEBI:15378"/>
        <dbReference type="ChEBI" id="CHEBI:28199"/>
        <dbReference type="ChEBI" id="CHEBI:143011"/>
    </reaction>
    <physiologicalReaction direction="left-to-right" evidence="1">
        <dbReference type="Rhea" id="RHEA:59257"/>
    </physiologicalReaction>
</comment>
<comment type="catalytic activity">
    <reaction evidence="1">
        <text>Fe(III)-[N-(2,3-dihydroxybenzoyl)-L-serine]3 + H2O + H(+) = Fe(III)-[N-(2,3-dihydroxybenzoyl)-L-serine]2 + N-(2,3-dihydroxybenzoyl)-L-serine</text>
        <dbReference type="Rhea" id="RHEA:59260"/>
        <dbReference type="ChEBI" id="CHEBI:15377"/>
        <dbReference type="ChEBI" id="CHEBI:15378"/>
        <dbReference type="ChEBI" id="CHEBI:58154"/>
        <dbReference type="ChEBI" id="CHEBI:143011"/>
        <dbReference type="ChEBI" id="CHEBI:143012"/>
    </reaction>
    <physiologicalReaction direction="left-to-right" evidence="1">
        <dbReference type="Rhea" id="RHEA:59261"/>
    </physiologicalReaction>
</comment>
<comment type="catalytic activity">
    <reaction evidence="1">
        <text>Fe(III)-[N-(2,3-dihydroxybenzoyl)-L-serine]2 + H2O + H(+) = Fe(III)-[N-(2,3-dihydroxybenzoyl)-L-serine] + N-(2,3-dihydroxybenzoyl)-L-serine</text>
        <dbReference type="Rhea" id="RHEA:59264"/>
        <dbReference type="ChEBI" id="CHEBI:15377"/>
        <dbReference type="ChEBI" id="CHEBI:15378"/>
        <dbReference type="ChEBI" id="CHEBI:58154"/>
        <dbReference type="ChEBI" id="CHEBI:143010"/>
        <dbReference type="ChEBI" id="CHEBI:143012"/>
    </reaction>
    <physiologicalReaction direction="left-to-right" evidence="1">
        <dbReference type="Rhea" id="RHEA:59265"/>
    </physiologicalReaction>
</comment>
<comment type="catalytic activity">
    <reaction evidence="2">
        <text>enterobactin + 3 H2O = 3 N-(2,3-dihydroxybenzoyl)-L-serine + 2 H(+)</text>
        <dbReference type="Rhea" id="RHEA:28018"/>
        <dbReference type="ChEBI" id="CHEBI:15377"/>
        <dbReference type="ChEBI" id="CHEBI:15378"/>
        <dbReference type="ChEBI" id="CHEBI:58154"/>
        <dbReference type="ChEBI" id="CHEBI:77805"/>
    </reaction>
</comment>
<comment type="biophysicochemical properties">
    <kinetics>
        <KM evidence="2">100 uM for MGE</KM>
        <KM evidence="2">0.29 uM for Fe-MGE</KM>
        <text evidence="2">kcat is 9 min(-1) with Fe-Ent as substrate. kcat is 850 min(-1) with MGE as substrate. kcat is 1.4 min(-1) with Fe-MGE as substrate.</text>
    </kinetics>
</comment>
<comment type="subcellular location">
    <subcellularLocation>
        <location evidence="1">Cytoplasm</location>
    </subcellularLocation>
</comment>
<comment type="similarity">
    <text evidence="4">Belongs to the Fes family.</text>
</comment>